<organism>
    <name type="scientific">Xylella fastidiosa (strain M12)</name>
    <dbReference type="NCBI Taxonomy" id="405440"/>
    <lineage>
        <taxon>Bacteria</taxon>
        <taxon>Pseudomonadati</taxon>
        <taxon>Pseudomonadota</taxon>
        <taxon>Gammaproteobacteria</taxon>
        <taxon>Lysobacterales</taxon>
        <taxon>Lysobacteraceae</taxon>
        <taxon>Xylella</taxon>
    </lineage>
</organism>
<proteinExistence type="inferred from homology"/>
<gene>
    <name evidence="1" type="primary">cysH</name>
    <name type="ordered locus">Xfasm12_0837</name>
</gene>
<evidence type="ECO:0000255" key="1">
    <source>
        <dbReference type="HAMAP-Rule" id="MF_00063"/>
    </source>
</evidence>
<protein>
    <recommendedName>
        <fullName evidence="1">Phosphoadenosine 5'-phosphosulfate reductase</fullName>
        <shortName evidence="1">PAPS reductase</shortName>
        <ecNumber evidence="1">1.8.4.8</ecNumber>
    </recommendedName>
    <alternativeName>
        <fullName evidence="1">3'-phosphoadenylylsulfate reductase</fullName>
    </alternativeName>
    <alternativeName>
        <fullName evidence="1">PAPS reductase, thioredoxin dependent</fullName>
    </alternativeName>
    <alternativeName>
        <fullName evidence="1">PAPS sulfotransferase</fullName>
    </alternativeName>
    <alternativeName>
        <fullName evidence="1">PAdoPS reductase</fullName>
    </alternativeName>
</protein>
<name>CYSH_XYLFM</name>
<feature type="chain" id="PRO_1000092193" description="Phosphoadenosine 5'-phosphosulfate reductase">
    <location>
        <begin position="1"/>
        <end position="237"/>
    </location>
</feature>
<feature type="active site" description="Nucleophile; cysteine thiosulfonate intermediate" evidence="1">
    <location>
        <position position="231"/>
    </location>
</feature>
<accession>B0U6V9</accession>
<reference key="1">
    <citation type="journal article" date="2010" name="J. Bacteriol.">
        <title>Whole genome sequences of two Xylella fastidiosa strains (M12 and M23) causing almond leaf scorch disease in California.</title>
        <authorList>
            <person name="Chen J."/>
            <person name="Xie G."/>
            <person name="Han S."/>
            <person name="Chertkov O."/>
            <person name="Sims D."/>
            <person name="Civerolo E.L."/>
        </authorList>
    </citation>
    <scope>NUCLEOTIDE SEQUENCE [LARGE SCALE GENOMIC DNA]</scope>
    <source>
        <strain>M12</strain>
    </source>
</reference>
<sequence length="237" mass="27647">MTVLPALPPLDDLETLNVHLETLSAENRVCWALQHAPDHPALSSSFGAQSAVMLHLLTRFAPDIPVILVDTGYLFPETYRFADTLTERLKLNLKVYQPLRSGTWTEARHGRLWEQGIDGINQYNTLHKVEPMRRALEELQVGTWFTGLRRGQSSTRTQTSIVQRRDERYKISPIVDWTDRDIWEYMKHHDLPYHPLWEQGYVSIGDIHTTRPLEPDMREEDTRFFGFKRECGIHENI</sequence>
<keyword id="KW-0963">Cytoplasm</keyword>
<keyword id="KW-0560">Oxidoreductase</keyword>
<comment type="function">
    <text evidence="1">Catalyzes the formation of sulfite from phosphoadenosine 5'-phosphosulfate (PAPS) using thioredoxin as an electron donor.</text>
</comment>
<comment type="catalytic activity">
    <reaction evidence="1">
        <text>[thioredoxin]-disulfide + sulfite + adenosine 3',5'-bisphosphate + 2 H(+) = [thioredoxin]-dithiol + 3'-phosphoadenylyl sulfate</text>
        <dbReference type="Rhea" id="RHEA:11724"/>
        <dbReference type="Rhea" id="RHEA-COMP:10698"/>
        <dbReference type="Rhea" id="RHEA-COMP:10700"/>
        <dbReference type="ChEBI" id="CHEBI:15378"/>
        <dbReference type="ChEBI" id="CHEBI:17359"/>
        <dbReference type="ChEBI" id="CHEBI:29950"/>
        <dbReference type="ChEBI" id="CHEBI:50058"/>
        <dbReference type="ChEBI" id="CHEBI:58339"/>
        <dbReference type="ChEBI" id="CHEBI:58343"/>
        <dbReference type="EC" id="1.8.4.8"/>
    </reaction>
</comment>
<comment type="pathway">
    <text evidence="1">Sulfur metabolism; hydrogen sulfide biosynthesis; sulfite from sulfate: step 3/3.</text>
</comment>
<comment type="subcellular location">
    <subcellularLocation>
        <location evidence="1">Cytoplasm</location>
    </subcellularLocation>
</comment>
<comment type="similarity">
    <text evidence="1">Belongs to the PAPS reductase family. CysH subfamily.</text>
</comment>
<dbReference type="EC" id="1.8.4.8" evidence="1"/>
<dbReference type="EMBL" id="CP000941">
    <property type="protein sequence ID" value="ACA11825.1"/>
    <property type="molecule type" value="Genomic_DNA"/>
</dbReference>
<dbReference type="RefSeq" id="WP_004083705.1">
    <property type="nucleotide sequence ID" value="NC_010513.1"/>
</dbReference>
<dbReference type="SMR" id="B0U6V9"/>
<dbReference type="KEGG" id="xfm:Xfasm12_0837"/>
<dbReference type="HOGENOM" id="CLU_044089_3_0_6"/>
<dbReference type="UniPathway" id="UPA00140">
    <property type="reaction ID" value="UER00206"/>
</dbReference>
<dbReference type="GO" id="GO:0005737">
    <property type="term" value="C:cytoplasm"/>
    <property type="evidence" value="ECO:0007669"/>
    <property type="project" value="UniProtKB-SubCell"/>
</dbReference>
<dbReference type="GO" id="GO:0004604">
    <property type="term" value="F:phosphoadenylyl-sulfate reductase (thioredoxin) activity"/>
    <property type="evidence" value="ECO:0007669"/>
    <property type="project" value="UniProtKB-UniRule"/>
</dbReference>
<dbReference type="GO" id="GO:0070814">
    <property type="term" value="P:hydrogen sulfide biosynthetic process"/>
    <property type="evidence" value="ECO:0007669"/>
    <property type="project" value="UniProtKB-UniRule"/>
</dbReference>
<dbReference type="GO" id="GO:0019379">
    <property type="term" value="P:sulfate assimilation, phosphoadenylyl sulfate reduction by phosphoadenylyl-sulfate reductase (thioredoxin)"/>
    <property type="evidence" value="ECO:0007669"/>
    <property type="project" value="UniProtKB-UniRule"/>
</dbReference>
<dbReference type="CDD" id="cd23945">
    <property type="entry name" value="PAPS_reductase"/>
    <property type="match status" value="1"/>
</dbReference>
<dbReference type="FunFam" id="3.40.50.620:FF:000043">
    <property type="entry name" value="Phosphoadenosine phosphosulfate reductase"/>
    <property type="match status" value="1"/>
</dbReference>
<dbReference type="Gene3D" id="3.40.50.620">
    <property type="entry name" value="HUPs"/>
    <property type="match status" value="1"/>
</dbReference>
<dbReference type="HAMAP" id="MF_00063">
    <property type="entry name" value="CysH"/>
    <property type="match status" value="1"/>
</dbReference>
<dbReference type="InterPro" id="IPR004511">
    <property type="entry name" value="PAPS/APS_Rdtase"/>
</dbReference>
<dbReference type="InterPro" id="IPR002500">
    <property type="entry name" value="PAPS_reduct_dom"/>
</dbReference>
<dbReference type="InterPro" id="IPR011800">
    <property type="entry name" value="PAPS_reductase_CysH"/>
</dbReference>
<dbReference type="InterPro" id="IPR014729">
    <property type="entry name" value="Rossmann-like_a/b/a_fold"/>
</dbReference>
<dbReference type="NCBIfam" id="TIGR00434">
    <property type="entry name" value="cysH"/>
    <property type="match status" value="1"/>
</dbReference>
<dbReference type="NCBIfam" id="TIGR02057">
    <property type="entry name" value="PAPS_reductase"/>
    <property type="match status" value="1"/>
</dbReference>
<dbReference type="NCBIfam" id="NF002537">
    <property type="entry name" value="PRK02090.1"/>
    <property type="match status" value="1"/>
</dbReference>
<dbReference type="PANTHER" id="PTHR46509">
    <property type="entry name" value="PHOSPHOADENOSINE PHOSPHOSULFATE REDUCTASE"/>
    <property type="match status" value="1"/>
</dbReference>
<dbReference type="PANTHER" id="PTHR46509:SF1">
    <property type="entry name" value="PHOSPHOADENOSINE PHOSPHOSULFATE REDUCTASE"/>
    <property type="match status" value="1"/>
</dbReference>
<dbReference type="Pfam" id="PF01507">
    <property type="entry name" value="PAPS_reduct"/>
    <property type="match status" value="1"/>
</dbReference>
<dbReference type="PIRSF" id="PIRSF000857">
    <property type="entry name" value="PAPS_reductase"/>
    <property type="match status" value="1"/>
</dbReference>
<dbReference type="SUPFAM" id="SSF52402">
    <property type="entry name" value="Adenine nucleotide alpha hydrolases-like"/>
    <property type="match status" value="1"/>
</dbReference>